<organism>
    <name type="scientific">Synechococcus sp. (strain CC9902)</name>
    <dbReference type="NCBI Taxonomy" id="316279"/>
    <lineage>
        <taxon>Bacteria</taxon>
        <taxon>Bacillati</taxon>
        <taxon>Cyanobacteriota</taxon>
        <taxon>Cyanophyceae</taxon>
        <taxon>Synechococcales</taxon>
        <taxon>Synechococcaceae</taxon>
        <taxon>Synechococcus</taxon>
    </lineage>
</organism>
<sequence length="134" mass="14993">MAQGRRVERVAALIRKETSELLINGIRDERVHKGMVSITSVEVAGDLQHCKIFVSIFGEPNDQNEVMEGLEAASGFLRGELGRRLQMRRAPEVKFQLDRGLEKGTSVLGLLNQLEDQRQERGEIPPGSDELQPD</sequence>
<reference key="1">
    <citation type="submission" date="2005-08" db="EMBL/GenBank/DDBJ databases">
        <title>Complete sequence of Synechococcus sp. CC9902.</title>
        <authorList>
            <person name="Copeland A."/>
            <person name="Lucas S."/>
            <person name="Lapidus A."/>
            <person name="Barry K."/>
            <person name="Detter J.C."/>
            <person name="Glavina T."/>
            <person name="Hammon N."/>
            <person name="Israni S."/>
            <person name="Pitluck S."/>
            <person name="Martinez M."/>
            <person name="Schmutz J."/>
            <person name="Larimer F."/>
            <person name="Land M."/>
            <person name="Kyrpides N."/>
            <person name="Ivanova N."/>
            <person name="Richardson P."/>
        </authorList>
    </citation>
    <scope>NUCLEOTIDE SEQUENCE [LARGE SCALE GENOMIC DNA]</scope>
    <source>
        <strain>CC9902</strain>
    </source>
</reference>
<gene>
    <name evidence="1" type="primary">rbfA</name>
    <name type="ordered locus">Syncc9902_0341</name>
</gene>
<protein>
    <recommendedName>
        <fullName evidence="1">Ribosome-binding factor A</fullName>
    </recommendedName>
</protein>
<proteinExistence type="inferred from homology"/>
<feature type="chain" id="PRO_1000000237" description="Ribosome-binding factor A">
    <location>
        <begin position="1"/>
        <end position="134"/>
    </location>
</feature>
<feature type="region of interest" description="Disordered" evidence="2">
    <location>
        <begin position="115"/>
        <end position="134"/>
    </location>
</feature>
<comment type="function">
    <text evidence="1">One of several proteins that assist in the late maturation steps of the functional core of the 30S ribosomal subunit. Associates with free 30S ribosomal subunits (but not with 30S subunits that are part of 70S ribosomes or polysomes). Required for efficient processing of 16S rRNA. May interact with the 5'-terminal helix region of 16S rRNA.</text>
</comment>
<comment type="subunit">
    <text evidence="1">Monomer. Binds 30S ribosomal subunits, but not 50S ribosomal subunits or 70S ribosomes.</text>
</comment>
<comment type="subcellular location">
    <subcellularLocation>
        <location evidence="1">Cytoplasm</location>
    </subcellularLocation>
</comment>
<comment type="similarity">
    <text evidence="1">Belongs to the RbfA family.</text>
</comment>
<keyword id="KW-0963">Cytoplasm</keyword>
<keyword id="KW-1185">Reference proteome</keyword>
<keyword id="KW-0690">Ribosome biogenesis</keyword>
<evidence type="ECO:0000255" key="1">
    <source>
        <dbReference type="HAMAP-Rule" id="MF_00003"/>
    </source>
</evidence>
<evidence type="ECO:0000256" key="2">
    <source>
        <dbReference type="SAM" id="MobiDB-lite"/>
    </source>
</evidence>
<accession>Q3B014</accession>
<dbReference type="EMBL" id="CP000097">
    <property type="protein sequence ID" value="ABB25313.1"/>
    <property type="molecule type" value="Genomic_DNA"/>
</dbReference>
<dbReference type="RefSeq" id="WP_011359170.1">
    <property type="nucleotide sequence ID" value="NC_007513.1"/>
</dbReference>
<dbReference type="SMR" id="Q3B014"/>
<dbReference type="STRING" id="316279.Syncc9902_0341"/>
<dbReference type="KEGG" id="sye:Syncc9902_0341"/>
<dbReference type="eggNOG" id="COG0858">
    <property type="taxonomic scope" value="Bacteria"/>
</dbReference>
<dbReference type="HOGENOM" id="CLU_089475_2_1_3"/>
<dbReference type="OrthoDB" id="307788at2"/>
<dbReference type="Proteomes" id="UP000002712">
    <property type="component" value="Chromosome"/>
</dbReference>
<dbReference type="GO" id="GO:0005829">
    <property type="term" value="C:cytosol"/>
    <property type="evidence" value="ECO:0007669"/>
    <property type="project" value="TreeGrafter"/>
</dbReference>
<dbReference type="GO" id="GO:0043024">
    <property type="term" value="F:ribosomal small subunit binding"/>
    <property type="evidence" value="ECO:0007669"/>
    <property type="project" value="TreeGrafter"/>
</dbReference>
<dbReference type="GO" id="GO:0030490">
    <property type="term" value="P:maturation of SSU-rRNA"/>
    <property type="evidence" value="ECO:0007669"/>
    <property type="project" value="UniProtKB-UniRule"/>
</dbReference>
<dbReference type="Gene3D" id="3.30.300.20">
    <property type="match status" value="1"/>
</dbReference>
<dbReference type="HAMAP" id="MF_00003">
    <property type="entry name" value="RbfA"/>
    <property type="match status" value="1"/>
</dbReference>
<dbReference type="InterPro" id="IPR015946">
    <property type="entry name" value="KH_dom-like_a/b"/>
</dbReference>
<dbReference type="InterPro" id="IPR000238">
    <property type="entry name" value="RbfA"/>
</dbReference>
<dbReference type="InterPro" id="IPR023799">
    <property type="entry name" value="RbfA_dom_sf"/>
</dbReference>
<dbReference type="InterPro" id="IPR020053">
    <property type="entry name" value="Ribosome-bd_factorA_CS"/>
</dbReference>
<dbReference type="NCBIfam" id="TIGR00082">
    <property type="entry name" value="rbfA"/>
    <property type="match status" value="1"/>
</dbReference>
<dbReference type="PANTHER" id="PTHR33515">
    <property type="entry name" value="RIBOSOME-BINDING FACTOR A, CHLOROPLASTIC-RELATED"/>
    <property type="match status" value="1"/>
</dbReference>
<dbReference type="PANTHER" id="PTHR33515:SF1">
    <property type="entry name" value="RIBOSOME-BINDING FACTOR A, CHLOROPLASTIC-RELATED"/>
    <property type="match status" value="1"/>
</dbReference>
<dbReference type="Pfam" id="PF02033">
    <property type="entry name" value="RBFA"/>
    <property type="match status" value="1"/>
</dbReference>
<dbReference type="SUPFAM" id="SSF89919">
    <property type="entry name" value="Ribosome-binding factor A, RbfA"/>
    <property type="match status" value="1"/>
</dbReference>
<dbReference type="PROSITE" id="PS01319">
    <property type="entry name" value="RBFA"/>
    <property type="match status" value="1"/>
</dbReference>
<name>RBFA_SYNS9</name>